<comment type="function">
    <text evidence="1">Sulfur carrier protein involved in sulfur trafficking in the cell. Part of a sulfur-relay system required for 2-thiolation during synthesis of 2-thiouridine of the modified wobble base 5-methylaminomethyl-2-thiouridine (mnm(5)s(2)U) in tRNA. Interacts with IscS and stimulates its cysteine desulfurase activity. Accepts an activated sulfur from IscS, which is then transferred to TusD, and thus determines the direction of sulfur flow from IscS to 2-thiouridine formation. Also appears to be involved in sulfur transfer for the biosynthesis of molybdopterin.</text>
</comment>
<comment type="pathway">
    <text evidence="1">tRNA modification.</text>
</comment>
<comment type="subunit">
    <text evidence="1">Interacts with IscS.</text>
</comment>
<comment type="subcellular location">
    <subcellularLocation>
        <location evidence="1">Cytoplasm</location>
    </subcellularLocation>
</comment>
<comment type="similarity">
    <text evidence="1">Belongs to the sulfur carrier protein TusA family.</text>
</comment>
<feature type="chain" id="PRO_0000159050" description="Sulfur carrier protein TusA">
    <location>
        <begin position="1"/>
        <end position="81"/>
    </location>
</feature>
<feature type="active site" description="Cysteine persulfide intermediate" evidence="1">
    <location>
        <position position="19"/>
    </location>
</feature>
<name>TUSA_SALPA</name>
<organism>
    <name type="scientific">Salmonella paratyphi A (strain ATCC 9150 / SARB42)</name>
    <dbReference type="NCBI Taxonomy" id="295319"/>
    <lineage>
        <taxon>Bacteria</taxon>
        <taxon>Pseudomonadati</taxon>
        <taxon>Pseudomonadota</taxon>
        <taxon>Gammaproteobacteria</taxon>
        <taxon>Enterobacterales</taxon>
        <taxon>Enterobacteriaceae</taxon>
        <taxon>Salmonella</taxon>
    </lineage>
</organism>
<proteinExistence type="inferred from homology"/>
<protein>
    <recommendedName>
        <fullName evidence="1">Sulfur carrier protein TusA</fullName>
    </recommendedName>
    <alternativeName>
        <fullName evidence="1">Sulfur mediator TusA</fullName>
    </alternativeName>
    <alternativeName>
        <fullName evidence="1">Sulfur transfer protein TusA</fullName>
    </alternativeName>
    <alternativeName>
        <fullName evidence="1">tRNA 2-thiouridine synthesizing protein A</fullName>
    </alternativeName>
</protein>
<accession>Q5PJN7</accession>
<reference key="1">
    <citation type="journal article" date="2004" name="Nat. Genet.">
        <title>Comparison of genome degradation in Paratyphi A and Typhi, human-restricted serovars of Salmonella enterica that cause typhoid.</title>
        <authorList>
            <person name="McClelland M."/>
            <person name="Sanderson K.E."/>
            <person name="Clifton S.W."/>
            <person name="Latreille P."/>
            <person name="Porwollik S."/>
            <person name="Sabo A."/>
            <person name="Meyer R."/>
            <person name="Bieri T."/>
            <person name="Ozersky P."/>
            <person name="McLellan M."/>
            <person name="Harkins C.R."/>
            <person name="Wang C."/>
            <person name="Nguyen C."/>
            <person name="Berghoff A."/>
            <person name="Elliott G."/>
            <person name="Kohlberg S."/>
            <person name="Strong C."/>
            <person name="Du F."/>
            <person name="Carter J."/>
            <person name="Kremizki C."/>
            <person name="Layman D."/>
            <person name="Leonard S."/>
            <person name="Sun H."/>
            <person name="Fulton L."/>
            <person name="Nash W."/>
            <person name="Miner T."/>
            <person name="Minx P."/>
            <person name="Delehaunty K."/>
            <person name="Fronick C."/>
            <person name="Magrini V."/>
            <person name="Nhan M."/>
            <person name="Warren W."/>
            <person name="Florea L."/>
            <person name="Spieth J."/>
            <person name="Wilson R.K."/>
        </authorList>
    </citation>
    <scope>NUCLEOTIDE SEQUENCE [LARGE SCALE GENOMIC DNA]</scope>
    <source>
        <strain>ATCC 9150 / SARB42</strain>
    </source>
</reference>
<sequence>MSDLFSSPDHTLDALGLRCPEPVMMVRKTVRNMQTGETLLIIADDPATTRDIPGFCTFMEHDLLAQETEGLPYRYLLRKAH</sequence>
<gene>
    <name evidence="1" type="primary">tusA</name>
    <name type="ordered locus">SPA3429</name>
</gene>
<evidence type="ECO:0000255" key="1">
    <source>
        <dbReference type="HAMAP-Rule" id="MF_00413"/>
    </source>
</evidence>
<keyword id="KW-0963">Cytoplasm</keyword>
<keyword id="KW-0819">tRNA processing</keyword>
<dbReference type="EMBL" id="CP000026">
    <property type="protein sequence ID" value="AAV79240.1"/>
    <property type="molecule type" value="Genomic_DNA"/>
</dbReference>
<dbReference type="RefSeq" id="WP_001541054.1">
    <property type="nucleotide sequence ID" value="NC_006511.1"/>
</dbReference>
<dbReference type="SMR" id="Q5PJN7"/>
<dbReference type="GeneID" id="66757902"/>
<dbReference type="KEGG" id="spt:SPA3429"/>
<dbReference type="HOGENOM" id="CLU_165255_5_0_6"/>
<dbReference type="Proteomes" id="UP000008185">
    <property type="component" value="Chromosome"/>
</dbReference>
<dbReference type="GO" id="GO:0005737">
    <property type="term" value="C:cytoplasm"/>
    <property type="evidence" value="ECO:0007669"/>
    <property type="project" value="UniProtKB-SubCell"/>
</dbReference>
<dbReference type="GO" id="GO:0097163">
    <property type="term" value="F:sulfur carrier activity"/>
    <property type="evidence" value="ECO:0007669"/>
    <property type="project" value="UniProtKB-UniRule"/>
</dbReference>
<dbReference type="GO" id="GO:0002143">
    <property type="term" value="P:tRNA wobble position uridine thiolation"/>
    <property type="evidence" value="ECO:0007669"/>
    <property type="project" value="InterPro"/>
</dbReference>
<dbReference type="CDD" id="cd03423">
    <property type="entry name" value="SirA"/>
    <property type="match status" value="1"/>
</dbReference>
<dbReference type="Gene3D" id="3.30.110.40">
    <property type="entry name" value="TusA-like domain"/>
    <property type="match status" value="1"/>
</dbReference>
<dbReference type="HAMAP" id="MF_00413">
    <property type="entry name" value="Thiourid_synth_A"/>
    <property type="match status" value="1"/>
</dbReference>
<dbReference type="InterPro" id="IPR022931">
    <property type="entry name" value="Sulphur_carrier_TusA"/>
</dbReference>
<dbReference type="InterPro" id="IPR001455">
    <property type="entry name" value="TusA-like"/>
</dbReference>
<dbReference type="InterPro" id="IPR036868">
    <property type="entry name" value="TusA-like_sf"/>
</dbReference>
<dbReference type="NCBIfam" id="NF001423">
    <property type="entry name" value="PRK00299.1"/>
    <property type="match status" value="1"/>
</dbReference>
<dbReference type="PANTHER" id="PTHR33279:SF2">
    <property type="entry name" value="SULFUR CARRIER PROTEIN TUSA"/>
    <property type="match status" value="1"/>
</dbReference>
<dbReference type="PANTHER" id="PTHR33279">
    <property type="entry name" value="SULFUR CARRIER PROTEIN YEDF-RELATED"/>
    <property type="match status" value="1"/>
</dbReference>
<dbReference type="Pfam" id="PF01206">
    <property type="entry name" value="TusA"/>
    <property type="match status" value="1"/>
</dbReference>
<dbReference type="SUPFAM" id="SSF64307">
    <property type="entry name" value="SirA-like"/>
    <property type="match status" value="1"/>
</dbReference>
<dbReference type="PROSITE" id="PS01148">
    <property type="entry name" value="UPF0033"/>
    <property type="match status" value="1"/>
</dbReference>